<feature type="chain" id="PRO_1000188907" description="Urease subunit beta">
    <location>
        <begin position="1"/>
        <end position="101"/>
    </location>
</feature>
<accession>B3H2L4</accession>
<keyword id="KW-0963">Cytoplasm</keyword>
<keyword id="KW-0378">Hydrolase</keyword>
<sequence length="101" mass="11255">MIPGEYQLADGDVQANVGRKTVKLEVVNSGDRPIQVGSHYHFFETNHALKFDRLQARGMRLNVPSGNAVRFEPGEAKEVELVEFGGNKVIYGFHNEIDGKL</sequence>
<protein>
    <recommendedName>
        <fullName evidence="1">Urease subunit beta</fullName>
        <ecNumber evidence="1">3.5.1.5</ecNumber>
    </recommendedName>
    <alternativeName>
        <fullName evidence="1">Urea amidohydrolase subunit beta</fullName>
    </alternativeName>
</protein>
<evidence type="ECO:0000255" key="1">
    <source>
        <dbReference type="HAMAP-Rule" id="MF_01954"/>
    </source>
</evidence>
<name>URE2_ACTP7</name>
<reference key="1">
    <citation type="submission" date="2008-06" db="EMBL/GenBank/DDBJ databases">
        <title>Genome and proteome analysis of A. pleuropneumoniae serotype 7.</title>
        <authorList>
            <person name="Linke B."/>
            <person name="Buettner F."/>
            <person name="Martinez-Arias R."/>
            <person name="Goesmann A."/>
            <person name="Baltes N."/>
            <person name="Tegetmeyer H."/>
            <person name="Singh M."/>
            <person name="Gerlach G.F."/>
        </authorList>
    </citation>
    <scope>NUCLEOTIDE SEQUENCE [LARGE SCALE GENOMIC DNA]</scope>
    <source>
        <strain>AP76</strain>
    </source>
</reference>
<organism>
    <name type="scientific">Actinobacillus pleuropneumoniae serotype 7 (strain AP76)</name>
    <dbReference type="NCBI Taxonomy" id="537457"/>
    <lineage>
        <taxon>Bacteria</taxon>
        <taxon>Pseudomonadati</taxon>
        <taxon>Pseudomonadota</taxon>
        <taxon>Gammaproteobacteria</taxon>
        <taxon>Pasteurellales</taxon>
        <taxon>Pasteurellaceae</taxon>
        <taxon>Actinobacillus</taxon>
    </lineage>
</organism>
<dbReference type="EC" id="3.5.1.5" evidence="1"/>
<dbReference type="EMBL" id="CP001091">
    <property type="protein sequence ID" value="ACE62331.1"/>
    <property type="molecule type" value="Genomic_DNA"/>
</dbReference>
<dbReference type="RefSeq" id="WP_005599002.1">
    <property type="nucleotide sequence ID" value="NC_010939.1"/>
</dbReference>
<dbReference type="SMR" id="B3H2L4"/>
<dbReference type="GeneID" id="48599903"/>
<dbReference type="KEGG" id="apa:APP7_1679"/>
<dbReference type="HOGENOM" id="CLU_129707_1_1_6"/>
<dbReference type="UniPathway" id="UPA00258">
    <property type="reaction ID" value="UER00370"/>
</dbReference>
<dbReference type="Proteomes" id="UP000001226">
    <property type="component" value="Chromosome"/>
</dbReference>
<dbReference type="GO" id="GO:0035550">
    <property type="term" value="C:urease complex"/>
    <property type="evidence" value="ECO:0007669"/>
    <property type="project" value="InterPro"/>
</dbReference>
<dbReference type="GO" id="GO:0009039">
    <property type="term" value="F:urease activity"/>
    <property type="evidence" value="ECO:0007669"/>
    <property type="project" value="UniProtKB-UniRule"/>
</dbReference>
<dbReference type="GO" id="GO:0043419">
    <property type="term" value="P:urea catabolic process"/>
    <property type="evidence" value="ECO:0007669"/>
    <property type="project" value="UniProtKB-UniRule"/>
</dbReference>
<dbReference type="CDD" id="cd00407">
    <property type="entry name" value="Urease_beta"/>
    <property type="match status" value="1"/>
</dbReference>
<dbReference type="FunFam" id="2.10.150.10:FF:000001">
    <property type="entry name" value="Urease subunit beta"/>
    <property type="match status" value="1"/>
</dbReference>
<dbReference type="Gene3D" id="2.10.150.10">
    <property type="entry name" value="Urease, beta subunit"/>
    <property type="match status" value="1"/>
</dbReference>
<dbReference type="HAMAP" id="MF_01954">
    <property type="entry name" value="Urease_beta"/>
    <property type="match status" value="1"/>
</dbReference>
<dbReference type="InterPro" id="IPR002019">
    <property type="entry name" value="Urease_beta-like"/>
</dbReference>
<dbReference type="InterPro" id="IPR036461">
    <property type="entry name" value="Urease_betasu_sf"/>
</dbReference>
<dbReference type="InterPro" id="IPR050069">
    <property type="entry name" value="Urease_subunit"/>
</dbReference>
<dbReference type="NCBIfam" id="NF009682">
    <property type="entry name" value="PRK13203.1"/>
    <property type="match status" value="1"/>
</dbReference>
<dbReference type="NCBIfam" id="TIGR00192">
    <property type="entry name" value="urease_beta"/>
    <property type="match status" value="1"/>
</dbReference>
<dbReference type="PANTHER" id="PTHR33569">
    <property type="entry name" value="UREASE"/>
    <property type="match status" value="1"/>
</dbReference>
<dbReference type="PANTHER" id="PTHR33569:SF1">
    <property type="entry name" value="UREASE"/>
    <property type="match status" value="1"/>
</dbReference>
<dbReference type="Pfam" id="PF00699">
    <property type="entry name" value="Urease_beta"/>
    <property type="match status" value="1"/>
</dbReference>
<dbReference type="SUPFAM" id="SSF51278">
    <property type="entry name" value="Urease, beta-subunit"/>
    <property type="match status" value="1"/>
</dbReference>
<comment type="catalytic activity">
    <reaction evidence="1">
        <text>urea + 2 H2O + H(+) = hydrogencarbonate + 2 NH4(+)</text>
        <dbReference type="Rhea" id="RHEA:20557"/>
        <dbReference type="ChEBI" id="CHEBI:15377"/>
        <dbReference type="ChEBI" id="CHEBI:15378"/>
        <dbReference type="ChEBI" id="CHEBI:16199"/>
        <dbReference type="ChEBI" id="CHEBI:17544"/>
        <dbReference type="ChEBI" id="CHEBI:28938"/>
        <dbReference type="EC" id="3.5.1.5"/>
    </reaction>
</comment>
<comment type="pathway">
    <text evidence="1">Nitrogen metabolism; urea degradation; CO(2) and NH(3) from urea (urease route): step 1/1.</text>
</comment>
<comment type="subunit">
    <text evidence="1">Heterotrimer of UreA (gamma), UreB (beta) and UreC (alpha) subunits. Three heterotrimers associate to form the active enzyme.</text>
</comment>
<comment type="subcellular location">
    <subcellularLocation>
        <location evidence="1">Cytoplasm</location>
    </subcellularLocation>
</comment>
<comment type="similarity">
    <text evidence="1">Belongs to the urease beta subunit family.</text>
</comment>
<gene>
    <name evidence="1" type="primary">ureB</name>
    <name type="ordered locus">APP7_1679</name>
</gene>
<proteinExistence type="inferred from homology"/>